<accession>B3EMZ5</accession>
<sequence>MNNKEITTLWCRLIIEELGRHGIHRFCISPGSRSTPLTAAAARNAGTRCTIFPDERAAAFFALGFARATGKPAVLICTSGTAVANYFPAVVEASFSNLPILVLSADRPFELFETGANQTIRQQGLFGTYSRWNIELPEPSEAIPAEALLSTIDYAVGRSLGSPPGPVHLNIPFREPFDPVNLSGPKPREASLTLWKQNNEPLNRFALSRKIADRAVVDRTKALLKNASSPLIVAGQLDSRTDAEAIGSLAETLDIPLYADISSQLRMNDTHAPLQPLLLSKRFTASFNPDLILHFGGKIVGKQLAITIKNRAPEHFIVINNSSRRYNPDHNVTLQIEAEPGEFAKLLVPEKSRSGKHERSLKALSDEIEKELDNYCASGKPLTEISTARILSGMIPESHGLFIANSMPIRDMDTYAALRKNGSAPLCAMNRGASGIDGNIATAAGLAQGLGTPVTLLIGDISFLHDLNSLTLLQGMEQPLHIVVVNNNGGGIFSFLPVATEKDIFETNFGTPQNYSIRAAAETFGISYNSPSSPESFKASYADLSRSAVSGIIEVNGSREENLAEHRRVNKQLRNIIDRHI</sequence>
<keyword id="KW-0460">Magnesium</keyword>
<keyword id="KW-0464">Manganese</keyword>
<keyword id="KW-0474">Menaquinone biosynthesis</keyword>
<keyword id="KW-0479">Metal-binding</keyword>
<keyword id="KW-0786">Thiamine pyrophosphate</keyword>
<keyword id="KW-0808">Transferase</keyword>
<dbReference type="EC" id="2.2.1.9" evidence="1"/>
<dbReference type="EMBL" id="CP001101">
    <property type="protein sequence ID" value="ACE04984.1"/>
    <property type="molecule type" value="Genomic_DNA"/>
</dbReference>
<dbReference type="SMR" id="B3EMZ5"/>
<dbReference type="STRING" id="331678.Cphamn1_2075"/>
<dbReference type="KEGG" id="cpb:Cphamn1_2075"/>
<dbReference type="eggNOG" id="COG1165">
    <property type="taxonomic scope" value="Bacteria"/>
</dbReference>
<dbReference type="HOGENOM" id="CLU_006051_3_0_10"/>
<dbReference type="OrthoDB" id="9791859at2"/>
<dbReference type="UniPathway" id="UPA00079"/>
<dbReference type="UniPathway" id="UPA01057">
    <property type="reaction ID" value="UER00164"/>
</dbReference>
<dbReference type="GO" id="GO:0070204">
    <property type="term" value="F:2-succinyl-5-enolpyruvyl-6-hydroxy-3-cyclohexene-1-carboxylic-acid synthase activity"/>
    <property type="evidence" value="ECO:0007669"/>
    <property type="project" value="UniProtKB-UniRule"/>
</dbReference>
<dbReference type="GO" id="GO:0000287">
    <property type="term" value="F:magnesium ion binding"/>
    <property type="evidence" value="ECO:0007669"/>
    <property type="project" value="UniProtKB-UniRule"/>
</dbReference>
<dbReference type="GO" id="GO:0030145">
    <property type="term" value="F:manganese ion binding"/>
    <property type="evidence" value="ECO:0007669"/>
    <property type="project" value="UniProtKB-UniRule"/>
</dbReference>
<dbReference type="GO" id="GO:0030976">
    <property type="term" value="F:thiamine pyrophosphate binding"/>
    <property type="evidence" value="ECO:0007669"/>
    <property type="project" value="UniProtKB-UniRule"/>
</dbReference>
<dbReference type="GO" id="GO:0009234">
    <property type="term" value="P:menaquinone biosynthetic process"/>
    <property type="evidence" value="ECO:0007669"/>
    <property type="project" value="UniProtKB-UniRule"/>
</dbReference>
<dbReference type="CDD" id="cd07037">
    <property type="entry name" value="TPP_PYR_MenD"/>
    <property type="match status" value="1"/>
</dbReference>
<dbReference type="CDD" id="cd02009">
    <property type="entry name" value="TPP_SHCHC_synthase"/>
    <property type="match status" value="1"/>
</dbReference>
<dbReference type="Gene3D" id="3.40.50.970">
    <property type="match status" value="2"/>
</dbReference>
<dbReference type="Gene3D" id="3.40.50.1220">
    <property type="entry name" value="TPP-binding domain"/>
    <property type="match status" value="1"/>
</dbReference>
<dbReference type="HAMAP" id="MF_01659">
    <property type="entry name" value="MenD"/>
    <property type="match status" value="1"/>
</dbReference>
<dbReference type="InterPro" id="IPR029035">
    <property type="entry name" value="DHS-like_NAD/FAD-binding_dom"/>
</dbReference>
<dbReference type="InterPro" id="IPR004433">
    <property type="entry name" value="MenaQ_synth_MenD"/>
</dbReference>
<dbReference type="InterPro" id="IPR032264">
    <property type="entry name" value="MenD_middle"/>
</dbReference>
<dbReference type="InterPro" id="IPR029061">
    <property type="entry name" value="THDP-binding"/>
</dbReference>
<dbReference type="InterPro" id="IPR012001">
    <property type="entry name" value="Thiamin_PyroP_enz_TPP-bd_dom"/>
</dbReference>
<dbReference type="InterPro" id="IPR011766">
    <property type="entry name" value="TPP_enzyme_TPP-bd"/>
</dbReference>
<dbReference type="NCBIfam" id="TIGR00173">
    <property type="entry name" value="menD"/>
    <property type="match status" value="1"/>
</dbReference>
<dbReference type="PANTHER" id="PTHR42916">
    <property type="entry name" value="2-SUCCINYL-5-ENOLPYRUVYL-6-HYDROXY-3-CYCLOHEXENE-1-CARBOXYLATE SYNTHASE"/>
    <property type="match status" value="1"/>
</dbReference>
<dbReference type="PANTHER" id="PTHR42916:SF1">
    <property type="entry name" value="PROTEIN PHYLLO, CHLOROPLASTIC"/>
    <property type="match status" value="1"/>
</dbReference>
<dbReference type="Pfam" id="PF02775">
    <property type="entry name" value="TPP_enzyme_C"/>
    <property type="match status" value="1"/>
</dbReference>
<dbReference type="Pfam" id="PF16582">
    <property type="entry name" value="TPP_enzyme_M_2"/>
    <property type="match status" value="1"/>
</dbReference>
<dbReference type="Pfam" id="PF02776">
    <property type="entry name" value="TPP_enzyme_N"/>
    <property type="match status" value="1"/>
</dbReference>
<dbReference type="PIRSF" id="PIRSF004983">
    <property type="entry name" value="MenD"/>
    <property type="match status" value="1"/>
</dbReference>
<dbReference type="SUPFAM" id="SSF52467">
    <property type="entry name" value="DHS-like NAD/FAD-binding domain"/>
    <property type="match status" value="1"/>
</dbReference>
<dbReference type="SUPFAM" id="SSF52518">
    <property type="entry name" value="Thiamin diphosphate-binding fold (THDP-binding)"/>
    <property type="match status" value="2"/>
</dbReference>
<gene>
    <name evidence="1" type="primary">menD</name>
    <name type="ordered locus">Cphamn1_2075</name>
</gene>
<name>MEND_CHLPB</name>
<protein>
    <recommendedName>
        <fullName evidence="1">2-succinyl-5-enolpyruvyl-6-hydroxy-3-cyclohexene-1-carboxylate synthase</fullName>
        <shortName evidence="1">SEPHCHC synthase</shortName>
        <ecNumber evidence="1">2.2.1.9</ecNumber>
    </recommendedName>
    <alternativeName>
        <fullName evidence="1">Menaquinone biosynthesis protein MenD</fullName>
    </alternativeName>
</protein>
<feature type="chain" id="PRO_1000187062" description="2-succinyl-5-enolpyruvyl-6-hydroxy-3-cyclohexene-1-carboxylate synthase">
    <location>
        <begin position="1"/>
        <end position="581"/>
    </location>
</feature>
<comment type="function">
    <text evidence="1">Catalyzes the thiamine diphosphate-dependent decarboxylation of 2-oxoglutarate and the subsequent addition of the resulting succinic semialdehyde-thiamine pyrophosphate anion to isochorismate to yield 2-succinyl-5-enolpyruvyl-6-hydroxy-3-cyclohexene-1-carboxylate (SEPHCHC).</text>
</comment>
<comment type="catalytic activity">
    <reaction evidence="1">
        <text>isochorismate + 2-oxoglutarate + H(+) = 5-enolpyruvoyl-6-hydroxy-2-succinyl-cyclohex-3-ene-1-carboxylate + CO2</text>
        <dbReference type="Rhea" id="RHEA:25593"/>
        <dbReference type="ChEBI" id="CHEBI:15378"/>
        <dbReference type="ChEBI" id="CHEBI:16526"/>
        <dbReference type="ChEBI" id="CHEBI:16810"/>
        <dbReference type="ChEBI" id="CHEBI:29780"/>
        <dbReference type="ChEBI" id="CHEBI:58818"/>
        <dbReference type="EC" id="2.2.1.9"/>
    </reaction>
</comment>
<comment type="cofactor">
    <cofactor evidence="1">
        <name>Mg(2+)</name>
        <dbReference type="ChEBI" id="CHEBI:18420"/>
    </cofactor>
    <cofactor evidence="1">
        <name>Mn(2+)</name>
        <dbReference type="ChEBI" id="CHEBI:29035"/>
    </cofactor>
</comment>
<comment type="cofactor">
    <cofactor evidence="1">
        <name>thiamine diphosphate</name>
        <dbReference type="ChEBI" id="CHEBI:58937"/>
    </cofactor>
    <text evidence="1">Binds 1 thiamine pyrophosphate per subunit.</text>
</comment>
<comment type="pathway">
    <text evidence="1">Quinol/quinone metabolism; 1,4-dihydroxy-2-naphthoate biosynthesis; 1,4-dihydroxy-2-naphthoate from chorismate: step 2/7.</text>
</comment>
<comment type="pathway">
    <text evidence="1">Quinol/quinone metabolism; menaquinone biosynthesis.</text>
</comment>
<comment type="subunit">
    <text evidence="1">Homodimer.</text>
</comment>
<comment type="similarity">
    <text evidence="1">Belongs to the TPP enzyme family. MenD subfamily.</text>
</comment>
<reference key="1">
    <citation type="submission" date="2008-06" db="EMBL/GenBank/DDBJ databases">
        <title>Complete sequence of Chlorobium phaeobacteroides BS1.</title>
        <authorList>
            <consortium name="US DOE Joint Genome Institute"/>
            <person name="Lucas S."/>
            <person name="Copeland A."/>
            <person name="Lapidus A."/>
            <person name="Glavina del Rio T."/>
            <person name="Dalin E."/>
            <person name="Tice H."/>
            <person name="Bruce D."/>
            <person name="Goodwin L."/>
            <person name="Pitluck S."/>
            <person name="Schmutz J."/>
            <person name="Larimer F."/>
            <person name="Land M."/>
            <person name="Hauser L."/>
            <person name="Kyrpides N."/>
            <person name="Ovchinnikova G."/>
            <person name="Li T."/>
            <person name="Liu Z."/>
            <person name="Zhao F."/>
            <person name="Overmann J."/>
            <person name="Bryant D.A."/>
            <person name="Richardson P."/>
        </authorList>
    </citation>
    <scope>NUCLEOTIDE SEQUENCE [LARGE SCALE GENOMIC DNA]</scope>
    <source>
        <strain>BS1</strain>
    </source>
</reference>
<proteinExistence type="inferred from homology"/>
<evidence type="ECO:0000255" key="1">
    <source>
        <dbReference type="HAMAP-Rule" id="MF_01659"/>
    </source>
</evidence>
<organism>
    <name type="scientific">Chlorobium phaeobacteroides (strain BS1)</name>
    <dbReference type="NCBI Taxonomy" id="331678"/>
    <lineage>
        <taxon>Bacteria</taxon>
        <taxon>Pseudomonadati</taxon>
        <taxon>Chlorobiota</taxon>
        <taxon>Chlorobiia</taxon>
        <taxon>Chlorobiales</taxon>
        <taxon>Chlorobiaceae</taxon>
        <taxon>Chlorobium/Pelodictyon group</taxon>
        <taxon>Chlorobium</taxon>
    </lineage>
</organism>